<proteinExistence type="inferred from homology"/>
<dbReference type="EC" id="3.6.1.9" evidence="1"/>
<dbReference type="EMBL" id="AE016825">
    <property type="protein sequence ID" value="AAQ57803.1"/>
    <property type="molecule type" value="Genomic_DNA"/>
</dbReference>
<dbReference type="RefSeq" id="WP_011133679.1">
    <property type="nucleotide sequence ID" value="NC_005085.1"/>
</dbReference>
<dbReference type="SMR" id="Q7P1T8"/>
<dbReference type="STRING" id="243365.CV_0124"/>
<dbReference type="GeneID" id="66365982"/>
<dbReference type="KEGG" id="cvi:CV_0124"/>
<dbReference type="eggNOG" id="COG0424">
    <property type="taxonomic scope" value="Bacteria"/>
</dbReference>
<dbReference type="HOGENOM" id="CLU_040416_2_1_4"/>
<dbReference type="OrthoDB" id="9807767at2"/>
<dbReference type="Proteomes" id="UP000001424">
    <property type="component" value="Chromosome"/>
</dbReference>
<dbReference type="GO" id="GO:0005737">
    <property type="term" value="C:cytoplasm"/>
    <property type="evidence" value="ECO:0007669"/>
    <property type="project" value="UniProtKB-SubCell"/>
</dbReference>
<dbReference type="GO" id="GO:0036218">
    <property type="term" value="F:dTTP diphosphatase activity"/>
    <property type="evidence" value="ECO:0007669"/>
    <property type="project" value="RHEA"/>
</dbReference>
<dbReference type="GO" id="GO:0036221">
    <property type="term" value="F:UTP diphosphatase activity"/>
    <property type="evidence" value="ECO:0007669"/>
    <property type="project" value="RHEA"/>
</dbReference>
<dbReference type="GO" id="GO:0009117">
    <property type="term" value="P:nucleotide metabolic process"/>
    <property type="evidence" value="ECO:0007669"/>
    <property type="project" value="UniProtKB-KW"/>
</dbReference>
<dbReference type="CDD" id="cd00555">
    <property type="entry name" value="Maf"/>
    <property type="match status" value="1"/>
</dbReference>
<dbReference type="Gene3D" id="3.90.950.10">
    <property type="match status" value="1"/>
</dbReference>
<dbReference type="HAMAP" id="MF_00528">
    <property type="entry name" value="Maf"/>
    <property type="match status" value="1"/>
</dbReference>
<dbReference type="InterPro" id="IPR029001">
    <property type="entry name" value="ITPase-like_fam"/>
</dbReference>
<dbReference type="InterPro" id="IPR003697">
    <property type="entry name" value="Maf-like"/>
</dbReference>
<dbReference type="NCBIfam" id="TIGR00172">
    <property type="entry name" value="maf"/>
    <property type="match status" value="1"/>
</dbReference>
<dbReference type="PANTHER" id="PTHR43213">
    <property type="entry name" value="BIFUNCTIONAL DTTP/UTP PYROPHOSPHATASE/METHYLTRANSFERASE PROTEIN-RELATED"/>
    <property type="match status" value="1"/>
</dbReference>
<dbReference type="PANTHER" id="PTHR43213:SF5">
    <property type="entry name" value="BIFUNCTIONAL DTTP_UTP PYROPHOSPHATASE_METHYLTRANSFERASE PROTEIN-RELATED"/>
    <property type="match status" value="1"/>
</dbReference>
<dbReference type="Pfam" id="PF02545">
    <property type="entry name" value="Maf"/>
    <property type="match status" value="1"/>
</dbReference>
<dbReference type="PIRSF" id="PIRSF006305">
    <property type="entry name" value="Maf"/>
    <property type="match status" value="1"/>
</dbReference>
<dbReference type="SUPFAM" id="SSF52972">
    <property type="entry name" value="ITPase-like"/>
    <property type="match status" value="1"/>
</dbReference>
<feature type="chain" id="PRO_0000123013" description="dTTP/UTP pyrophosphatase">
    <location>
        <begin position="1"/>
        <end position="198"/>
    </location>
</feature>
<feature type="active site" description="Proton acceptor" evidence="1">
    <location>
        <position position="78"/>
    </location>
</feature>
<feature type="site" description="Important for substrate specificity" evidence="1">
    <location>
        <position position="16"/>
    </location>
</feature>
<feature type="site" description="Important for substrate specificity" evidence="1">
    <location>
        <position position="79"/>
    </location>
</feature>
<feature type="site" description="Important for substrate specificity" evidence="1">
    <location>
        <position position="161"/>
    </location>
</feature>
<reference key="1">
    <citation type="journal article" date="2003" name="Proc. Natl. Acad. Sci. U.S.A.">
        <title>The complete genome sequence of Chromobacterium violaceum reveals remarkable and exploitable bacterial adaptability.</title>
        <authorList>
            <person name="Vasconcelos A.T.R."/>
            <person name="de Almeida D.F."/>
            <person name="Hungria M."/>
            <person name="Guimaraes C.T."/>
            <person name="Antonio R.V."/>
            <person name="Almeida F.C."/>
            <person name="de Almeida L.G.P."/>
            <person name="de Almeida R."/>
            <person name="Alves-Gomes J.A."/>
            <person name="Andrade E.M."/>
            <person name="Araripe J."/>
            <person name="de Araujo M.F.F."/>
            <person name="Astolfi-Filho S."/>
            <person name="Azevedo V."/>
            <person name="Baptista A.J."/>
            <person name="Bataus L.A.M."/>
            <person name="Batista J.S."/>
            <person name="Belo A."/>
            <person name="van den Berg C."/>
            <person name="Bogo M."/>
            <person name="Bonatto S."/>
            <person name="Bordignon J."/>
            <person name="Brigido M.M."/>
            <person name="Brito C.A."/>
            <person name="Brocchi M."/>
            <person name="Burity H.A."/>
            <person name="Camargo A.A."/>
            <person name="Cardoso D.D.P."/>
            <person name="Carneiro N.P."/>
            <person name="Carraro D.M."/>
            <person name="Carvalho C.M.B."/>
            <person name="Cascardo J.C.M."/>
            <person name="Cavada B.S."/>
            <person name="Chueire L.M.O."/>
            <person name="Creczynski-Pasa T.B."/>
            <person name="Cunha-Junior N.C."/>
            <person name="Fagundes N."/>
            <person name="Falcao C.L."/>
            <person name="Fantinatti F."/>
            <person name="Farias I.P."/>
            <person name="Felipe M.S.S."/>
            <person name="Ferrari L.P."/>
            <person name="Ferro J.A."/>
            <person name="Ferro M.I.T."/>
            <person name="Franco G.R."/>
            <person name="Freitas N.S.A."/>
            <person name="Furlan L.R."/>
            <person name="Gazzinelli R.T."/>
            <person name="Gomes E.A."/>
            <person name="Goncalves P.R."/>
            <person name="Grangeiro T.B."/>
            <person name="Grattapaglia D."/>
            <person name="Grisard E.C."/>
            <person name="Hanna E.S."/>
            <person name="Jardim S.N."/>
            <person name="Laurino J."/>
            <person name="Leoi L.C.T."/>
            <person name="Lima L.F.A."/>
            <person name="Loureiro M.F."/>
            <person name="Lyra M.C.C.P."/>
            <person name="Madeira H.M.F."/>
            <person name="Manfio G.P."/>
            <person name="Maranhao A.Q."/>
            <person name="Martins W.S."/>
            <person name="di Mauro S.M.Z."/>
            <person name="de Medeiros S.R.B."/>
            <person name="Meissner R.V."/>
            <person name="Moreira M.A.M."/>
            <person name="Nascimento F.F."/>
            <person name="Nicolas M.F."/>
            <person name="Oliveira J.G."/>
            <person name="Oliveira S.C."/>
            <person name="Paixao R.F.C."/>
            <person name="Parente J.A."/>
            <person name="Pedrosa F.O."/>
            <person name="Pena S.D.J."/>
            <person name="Pereira J.O."/>
            <person name="Pereira M."/>
            <person name="Pinto L.S.R.C."/>
            <person name="Pinto L.S."/>
            <person name="Porto J.I.R."/>
            <person name="Potrich D.P."/>
            <person name="Ramalho-Neto C.E."/>
            <person name="Reis A.M.M."/>
            <person name="Rigo L.U."/>
            <person name="Rondinelli E."/>
            <person name="Santos E.B.P."/>
            <person name="Santos F.R."/>
            <person name="Schneider M.P.C."/>
            <person name="Seuanez H.N."/>
            <person name="Silva A.M.R."/>
            <person name="da Silva A.L.C."/>
            <person name="Silva D.W."/>
            <person name="Silva R."/>
            <person name="Simoes I.C."/>
            <person name="Simon D."/>
            <person name="Soares C.M.A."/>
            <person name="Soares R.B.A."/>
            <person name="Souza E.M."/>
            <person name="Souza K.R.L."/>
            <person name="Souza R.C."/>
            <person name="Steffens M.B.R."/>
            <person name="Steindel M."/>
            <person name="Teixeira S.R."/>
            <person name="Urmenyi T."/>
            <person name="Vettore A."/>
            <person name="Wassem R."/>
            <person name="Zaha A."/>
            <person name="Simpson A.J.G."/>
        </authorList>
    </citation>
    <scope>NUCLEOTIDE SEQUENCE [LARGE SCALE GENOMIC DNA]</scope>
    <source>
        <strain>ATCC 12472 / DSM 30191 / JCM 1249 / CCUG 213 / NBRC 12614 / NCIMB 9131 / NCTC 9757 / MK</strain>
    </source>
</reference>
<keyword id="KW-0963">Cytoplasm</keyword>
<keyword id="KW-0378">Hydrolase</keyword>
<keyword id="KW-0546">Nucleotide metabolism</keyword>
<keyword id="KW-1185">Reference proteome</keyword>
<name>NTPPA_CHRVO</name>
<sequence length="198" mass="21593">MSTNDTRIYLASGSPRRREILEQLGLHLERIHADIDESVRPGEDAVAYTERLAREKAEAGWRVVSSCGLPERPLLAADTTVSQDGEIFGKPEDADDARRMLRAFSGRSHQAITSVAVRDGGKLLVKTSITDVFFKSLSDAEIERYIASGEPFDKAGAYGIQGKAGVFVEHIEGSYTGVMGLPVHETALLLAEFGFELP</sequence>
<evidence type="ECO:0000255" key="1">
    <source>
        <dbReference type="HAMAP-Rule" id="MF_00528"/>
    </source>
</evidence>
<comment type="function">
    <text evidence="1">Nucleoside triphosphate pyrophosphatase that hydrolyzes dTTP and UTP. May have a dual role in cell division arrest and in preventing the incorporation of modified nucleotides into cellular nucleic acids.</text>
</comment>
<comment type="catalytic activity">
    <reaction evidence="1">
        <text>dTTP + H2O = dTMP + diphosphate + H(+)</text>
        <dbReference type="Rhea" id="RHEA:28534"/>
        <dbReference type="ChEBI" id="CHEBI:15377"/>
        <dbReference type="ChEBI" id="CHEBI:15378"/>
        <dbReference type="ChEBI" id="CHEBI:33019"/>
        <dbReference type="ChEBI" id="CHEBI:37568"/>
        <dbReference type="ChEBI" id="CHEBI:63528"/>
        <dbReference type="EC" id="3.6.1.9"/>
    </reaction>
</comment>
<comment type="catalytic activity">
    <reaction evidence="1">
        <text>UTP + H2O = UMP + diphosphate + H(+)</text>
        <dbReference type="Rhea" id="RHEA:29395"/>
        <dbReference type="ChEBI" id="CHEBI:15377"/>
        <dbReference type="ChEBI" id="CHEBI:15378"/>
        <dbReference type="ChEBI" id="CHEBI:33019"/>
        <dbReference type="ChEBI" id="CHEBI:46398"/>
        <dbReference type="ChEBI" id="CHEBI:57865"/>
        <dbReference type="EC" id="3.6.1.9"/>
    </reaction>
</comment>
<comment type="cofactor">
    <cofactor evidence="1">
        <name>a divalent metal cation</name>
        <dbReference type="ChEBI" id="CHEBI:60240"/>
    </cofactor>
</comment>
<comment type="subcellular location">
    <subcellularLocation>
        <location evidence="1">Cytoplasm</location>
    </subcellularLocation>
</comment>
<comment type="similarity">
    <text evidence="1">Belongs to the Maf family. YhdE subfamily.</text>
</comment>
<organism>
    <name type="scientific">Chromobacterium violaceum (strain ATCC 12472 / DSM 30191 / JCM 1249 / CCUG 213 / NBRC 12614 / NCIMB 9131 / NCTC 9757 / MK)</name>
    <dbReference type="NCBI Taxonomy" id="243365"/>
    <lineage>
        <taxon>Bacteria</taxon>
        <taxon>Pseudomonadati</taxon>
        <taxon>Pseudomonadota</taxon>
        <taxon>Betaproteobacteria</taxon>
        <taxon>Neisseriales</taxon>
        <taxon>Chromobacteriaceae</taxon>
        <taxon>Chromobacterium</taxon>
    </lineage>
</organism>
<accession>Q7P1T8</accession>
<gene>
    <name type="ordered locus">CV_0124</name>
</gene>
<protein>
    <recommendedName>
        <fullName evidence="1">dTTP/UTP pyrophosphatase</fullName>
        <shortName evidence="1">dTTPase/UTPase</shortName>
        <ecNumber evidence="1">3.6.1.9</ecNumber>
    </recommendedName>
    <alternativeName>
        <fullName evidence="1">Nucleoside triphosphate pyrophosphatase</fullName>
    </alternativeName>
    <alternativeName>
        <fullName evidence="1">Nucleotide pyrophosphatase</fullName>
        <shortName evidence="1">Nucleotide PPase</shortName>
    </alternativeName>
</protein>